<accession>Q5RAK3</accession>
<keyword id="KW-0256">Endoplasmic reticulum</keyword>
<keyword id="KW-0472">Membrane</keyword>
<keyword id="KW-0479">Metal-binding</keyword>
<keyword id="KW-0539">Nucleus</keyword>
<keyword id="KW-0597">Phosphoprotein</keyword>
<keyword id="KW-1185">Reference proteome</keyword>
<keyword id="KW-0808">Transferase</keyword>
<keyword id="KW-0812">Transmembrane</keyword>
<keyword id="KW-1133">Transmembrane helix</keyword>
<keyword id="KW-0833">Ubl conjugation pathway</keyword>
<keyword id="KW-0862">Zinc</keyword>
<keyword id="KW-0863">Zinc-finger</keyword>
<proteinExistence type="evidence at transcript level"/>
<reference key="1">
    <citation type="submission" date="2004-11" db="EMBL/GenBank/DDBJ databases">
        <authorList>
            <consortium name="The German cDNA consortium"/>
        </authorList>
    </citation>
    <scope>NUCLEOTIDE SEQUENCE [LARGE SCALE MRNA]</scope>
    <source>
        <tissue>Kidney</tissue>
    </source>
</reference>
<dbReference type="EC" id="2.3.2.27"/>
<dbReference type="EMBL" id="CR859012">
    <property type="protein sequence ID" value="CAH91207.1"/>
    <property type="molecule type" value="mRNA"/>
</dbReference>
<dbReference type="RefSeq" id="NP_001125710.1">
    <property type="nucleotide sequence ID" value="NM_001132238.1"/>
</dbReference>
<dbReference type="FunCoup" id="Q5RAK3">
    <property type="interactions" value="194"/>
</dbReference>
<dbReference type="Ensembl" id="ENSPPYT00000018024.3">
    <property type="protein sequence ID" value="ENSPPYP00000017319.3"/>
    <property type="gene ID" value="ENSPPYG00000015501.3"/>
</dbReference>
<dbReference type="GeneID" id="100172634"/>
<dbReference type="KEGG" id="pon:100172634"/>
<dbReference type="CTD" id="285671"/>
<dbReference type="GeneTree" id="ENSGT00950000182909"/>
<dbReference type="InParanoid" id="Q5RAK3"/>
<dbReference type="OMA" id="CETQTQR"/>
<dbReference type="OrthoDB" id="6105938at2759"/>
<dbReference type="UniPathway" id="UPA00143"/>
<dbReference type="Proteomes" id="UP000001595">
    <property type="component" value="Chromosome 5"/>
</dbReference>
<dbReference type="GO" id="GO:0005789">
    <property type="term" value="C:endoplasmic reticulum membrane"/>
    <property type="evidence" value="ECO:0007669"/>
    <property type="project" value="UniProtKB-SubCell"/>
</dbReference>
<dbReference type="GO" id="GO:0005635">
    <property type="term" value="C:nuclear envelope"/>
    <property type="evidence" value="ECO:0007669"/>
    <property type="project" value="UniProtKB-SubCell"/>
</dbReference>
<dbReference type="GO" id="GO:0031624">
    <property type="term" value="F:ubiquitin conjugating enzyme binding"/>
    <property type="evidence" value="ECO:0007669"/>
    <property type="project" value="Ensembl"/>
</dbReference>
<dbReference type="GO" id="GO:0061630">
    <property type="term" value="F:ubiquitin protein ligase activity"/>
    <property type="evidence" value="ECO:0007669"/>
    <property type="project" value="Ensembl"/>
</dbReference>
<dbReference type="GO" id="GO:0008270">
    <property type="term" value="F:zinc ion binding"/>
    <property type="evidence" value="ECO:0007669"/>
    <property type="project" value="UniProtKB-KW"/>
</dbReference>
<dbReference type="GO" id="GO:0030534">
    <property type="term" value="P:adult behavior"/>
    <property type="evidence" value="ECO:0007669"/>
    <property type="project" value="Ensembl"/>
</dbReference>
<dbReference type="GO" id="GO:0042415">
    <property type="term" value="P:norepinephrine metabolic process"/>
    <property type="evidence" value="ECO:0007669"/>
    <property type="project" value="Ensembl"/>
</dbReference>
<dbReference type="GO" id="GO:0032436">
    <property type="term" value="P:positive regulation of proteasomal ubiquitin-dependent protein catabolic process"/>
    <property type="evidence" value="ECO:0007669"/>
    <property type="project" value="Ensembl"/>
</dbReference>
<dbReference type="GO" id="GO:0031398">
    <property type="term" value="P:positive regulation of protein ubiquitination"/>
    <property type="evidence" value="ECO:0007669"/>
    <property type="project" value="Ensembl"/>
</dbReference>
<dbReference type="GO" id="GO:0000209">
    <property type="term" value="P:protein polyubiquitination"/>
    <property type="evidence" value="ECO:0007669"/>
    <property type="project" value="Ensembl"/>
</dbReference>
<dbReference type="GO" id="GO:0042428">
    <property type="term" value="P:serotonin metabolic process"/>
    <property type="evidence" value="ECO:0007669"/>
    <property type="project" value="Ensembl"/>
</dbReference>
<dbReference type="CDD" id="cd16554">
    <property type="entry name" value="RING-HC_RNF180"/>
    <property type="match status" value="1"/>
</dbReference>
<dbReference type="FunFam" id="3.30.40.10:FF:000316">
    <property type="entry name" value="E3 ubiquitin-protein ligase RNF180"/>
    <property type="match status" value="1"/>
</dbReference>
<dbReference type="Gene3D" id="3.30.40.10">
    <property type="entry name" value="Zinc/RING finger domain, C3HC4 (zinc finger)"/>
    <property type="match status" value="1"/>
</dbReference>
<dbReference type="InterPro" id="IPR033263">
    <property type="entry name" value="RNF180"/>
</dbReference>
<dbReference type="InterPro" id="IPR045790">
    <property type="entry name" value="RNF180_C"/>
</dbReference>
<dbReference type="InterPro" id="IPR001841">
    <property type="entry name" value="Znf_RING"/>
</dbReference>
<dbReference type="InterPro" id="IPR013083">
    <property type="entry name" value="Znf_RING/FYVE/PHD"/>
</dbReference>
<dbReference type="InterPro" id="IPR017907">
    <property type="entry name" value="Znf_RING_CS"/>
</dbReference>
<dbReference type="PANTHER" id="PTHR46717">
    <property type="entry name" value="E3 UBIQUITIN-PROTEIN LIGASE RNF180"/>
    <property type="match status" value="1"/>
</dbReference>
<dbReference type="PANTHER" id="PTHR46717:SF1">
    <property type="entry name" value="E3 UBIQUITIN-PROTEIN LIGASE RNF180"/>
    <property type="match status" value="1"/>
</dbReference>
<dbReference type="Pfam" id="PF19332">
    <property type="entry name" value="RNF180_C"/>
    <property type="match status" value="1"/>
</dbReference>
<dbReference type="Pfam" id="PF13920">
    <property type="entry name" value="zf-C3HC4_3"/>
    <property type="match status" value="1"/>
</dbReference>
<dbReference type="SMART" id="SM00184">
    <property type="entry name" value="RING"/>
    <property type="match status" value="1"/>
</dbReference>
<dbReference type="SUPFAM" id="SSF57850">
    <property type="entry name" value="RING/U-box"/>
    <property type="match status" value="1"/>
</dbReference>
<dbReference type="PROSITE" id="PS00518">
    <property type="entry name" value="ZF_RING_1"/>
    <property type="match status" value="1"/>
</dbReference>
<dbReference type="PROSITE" id="PS50089">
    <property type="entry name" value="ZF_RING_2"/>
    <property type="match status" value="1"/>
</dbReference>
<evidence type="ECO:0000250" key="1">
    <source>
        <dbReference type="UniProtKB" id="Q3U827"/>
    </source>
</evidence>
<evidence type="ECO:0000255" key="2"/>
<evidence type="ECO:0000255" key="3">
    <source>
        <dbReference type="PROSITE-ProRule" id="PRU00175"/>
    </source>
</evidence>
<evidence type="ECO:0000305" key="4"/>
<gene>
    <name type="primary">RNF180</name>
</gene>
<name>RN180_PONAB</name>
<organism>
    <name type="scientific">Pongo abelii</name>
    <name type="common">Sumatran orangutan</name>
    <name type="synonym">Pongo pygmaeus abelii</name>
    <dbReference type="NCBI Taxonomy" id="9601"/>
    <lineage>
        <taxon>Eukaryota</taxon>
        <taxon>Metazoa</taxon>
        <taxon>Chordata</taxon>
        <taxon>Craniata</taxon>
        <taxon>Vertebrata</taxon>
        <taxon>Euteleostomi</taxon>
        <taxon>Mammalia</taxon>
        <taxon>Eutheria</taxon>
        <taxon>Euarchontoglires</taxon>
        <taxon>Primates</taxon>
        <taxon>Haplorrhini</taxon>
        <taxon>Catarrhini</taxon>
        <taxon>Hominidae</taxon>
        <taxon>Pongo</taxon>
    </lineage>
</organism>
<comment type="function">
    <text evidence="1">E3 ubiquitin-protein ligase which promotes polyubiquitination and degradation by the proteasome pathway of ZIC2.</text>
</comment>
<comment type="catalytic activity">
    <reaction>
        <text>S-ubiquitinyl-[E2 ubiquitin-conjugating enzyme]-L-cysteine + [acceptor protein]-L-lysine = [E2 ubiquitin-conjugating enzyme]-L-cysteine + N(6)-ubiquitinyl-[acceptor protein]-L-lysine.</text>
        <dbReference type="EC" id="2.3.2.27"/>
    </reaction>
</comment>
<comment type="pathway">
    <text>Protein modification; protein ubiquitination.</text>
</comment>
<comment type="subunit">
    <text evidence="1">Interacts with ZIC2.</text>
</comment>
<comment type="subcellular location">
    <subcellularLocation>
        <location>Endoplasmic reticulum membrane</location>
        <topology>Single-pass membrane protein</topology>
    </subcellularLocation>
    <subcellularLocation>
        <location evidence="1">Nucleus envelope</location>
    </subcellularLocation>
</comment>
<comment type="domain">
    <text>The RING-type zinc finger domain mediates polyubiquitination of the interacting protein.</text>
</comment>
<protein>
    <recommendedName>
        <fullName>E3 ubiquitin-protein ligase RNF180</fullName>
        <ecNumber>2.3.2.27</ecNumber>
    </recommendedName>
    <alternativeName>
        <fullName>RING finger protein 180</fullName>
    </alternativeName>
    <alternativeName>
        <fullName evidence="4">RING-type E3 ubiquitin transferase RNF180</fullName>
    </alternativeName>
</protein>
<feature type="chain" id="PRO_0000261619" description="E3 ubiquitin-protein ligase RNF180">
    <location>
        <begin position="1"/>
        <end position="592"/>
    </location>
</feature>
<feature type="topological domain" description="Cytoplasmic" evidence="2">
    <location>
        <begin position="1"/>
        <end position="564"/>
    </location>
</feature>
<feature type="transmembrane region" description="Helical" evidence="2">
    <location>
        <begin position="565"/>
        <end position="585"/>
    </location>
</feature>
<feature type="topological domain" description="Extracellular" evidence="2">
    <location>
        <begin position="586"/>
        <end position="592"/>
    </location>
</feature>
<feature type="zinc finger region" description="RING-type" evidence="3">
    <location>
        <begin position="432"/>
        <end position="474"/>
    </location>
</feature>
<feature type="modified residue" description="Phosphoserine" evidence="1">
    <location>
        <position position="230"/>
    </location>
</feature>
<sequence length="592" mass="68308">MKRSKELITKNHSQEETSILRCWKCRKCIASSGCFMEYFENQVIKDKDDSVDAQNICHVWHMNIESLPEWISCLIQKAQWTVGKLNCPFCGARLGGFNFVSTPKCSCGQLAAVHLSKSRTDYQPTQAGRLMRPSVKYLSHPRVQSGCDKEVLLTGGGSKNRNHRLLNMARNNNDPGRLTEALCLEVRPTYFEMKNEKLLSKASEPKYQLFVPQLVTGRCTTRAFHRKSHSLDLNISEKLTLLPTLYEIRGKTTAYSRLNETQPIDLSGLPLQSSKNSCSFQNPSSFDPGMLLQRFSVAPHETQTQRGGEFQCGLEAASVYSDHTNTNNLTFLMDLPSAGRSMPEASDQEEHLSPLDFLHSANFSLGSINQRLNKRERSKLKNLRRKQRRRERWLQKQGKYSGVGFLDHMTLNNEMSTDEDNEYAEEKDSYICAVCLDVYFNPYMCYPCRHIFCEPCLRTLAKDNPSSTPCPLCRTIISRVFFQTELNNATKTFFTKEYLKIKQSFQKSNSAKWPLPSCRKAFHLFGGFHRHAAPVTRRQFPHGAHRMDYLHFEDDSRGWWFDMDMVIIYIYSVNWVIGFIVFCFLCYFFFPF</sequence>